<gene>
    <name evidence="1" type="primary">tgt</name>
    <name type="ordered locus">XfasM23_0167</name>
</gene>
<sequence>MSRLQFQLQATDGAARRGQLSFPCGTVQTPTFMPVGTYGAVKGVLPGQLCDLGAEIILGNTFHLFLRPGLEVIADHGGLHGFMRWNGPILTDSGGFQVFSLAHRRKISEQGVTFAAPTDGAQVFLGPEESMKIQKVLNSDVVMIFDECTPYPATEDVARDSMELSLRWAQRSRDAHDALDNDAALFGIIQGGVHPDLRGRSLDGLQAIGFDGYGIGGLAVGESESERNVILEYLHPRLPTDRPRYLMGVGRPEDLVESVARGVDMFDCVMPTRHARNGQYFTGFGTVKIRNACYARDVDPIEQGCGCPACVGGYTRAYLRHLDRCNEMLASMLGSLHNLWYYETLMANMRAAITAGTFFAFRRSFYLARGLDPPPLP</sequence>
<reference key="1">
    <citation type="journal article" date="2010" name="J. Bacteriol.">
        <title>Whole genome sequences of two Xylella fastidiosa strains (M12 and M23) causing almond leaf scorch disease in California.</title>
        <authorList>
            <person name="Chen J."/>
            <person name="Xie G."/>
            <person name="Han S."/>
            <person name="Chertkov O."/>
            <person name="Sims D."/>
            <person name="Civerolo E.L."/>
        </authorList>
    </citation>
    <scope>NUCLEOTIDE SEQUENCE [LARGE SCALE GENOMIC DNA]</scope>
    <source>
        <strain>M23</strain>
    </source>
</reference>
<name>TGT_XYLF2</name>
<comment type="function">
    <text evidence="1">Catalyzes the base-exchange of a guanine (G) residue with the queuine precursor 7-aminomethyl-7-deazaguanine (PreQ1) at position 34 (anticodon wobble position) in tRNAs with GU(N) anticodons (tRNA-Asp, -Asn, -His and -Tyr). Catalysis occurs through a double-displacement mechanism. The nucleophile active site attacks the C1' of nucleotide 34 to detach the guanine base from the RNA, forming a covalent enzyme-RNA intermediate. The proton acceptor active site deprotonates the incoming PreQ1, allowing a nucleophilic attack on the C1' of the ribose to form the product. After dissociation, two additional enzymatic reactions on the tRNA convert PreQ1 to queuine (Q), resulting in the hypermodified nucleoside queuosine (7-(((4,5-cis-dihydroxy-2-cyclopenten-1-yl)amino)methyl)-7-deazaguanosine).</text>
</comment>
<comment type="catalytic activity">
    <reaction evidence="1">
        <text>7-aminomethyl-7-carbaguanine + guanosine(34) in tRNA = 7-aminomethyl-7-carbaguanosine(34) in tRNA + guanine</text>
        <dbReference type="Rhea" id="RHEA:24104"/>
        <dbReference type="Rhea" id="RHEA-COMP:10341"/>
        <dbReference type="Rhea" id="RHEA-COMP:10342"/>
        <dbReference type="ChEBI" id="CHEBI:16235"/>
        <dbReference type="ChEBI" id="CHEBI:58703"/>
        <dbReference type="ChEBI" id="CHEBI:74269"/>
        <dbReference type="ChEBI" id="CHEBI:82833"/>
        <dbReference type="EC" id="2.4.2.29"/>
    </reaction>
</comment>
<comment type="cofactor">
    <cofactor evidence="1">
        <name>Zn(2+)</name>
        <dbReference type="ChEBI" id="CHEBI:29105"/>
    </cofactor>
    <text evidence="1">Binds 1 zinc ion per subunit.</text>
</comment>
<comment type="pathway">
    <text evidence="1">tRNA modification; tRNA-queuosine biosynthesis.</text>
</comment>
<comment type="subunit">
    <text evidence="1">Homodimer. Within each dimer, one monomer is responsible for RNA recognition and catalysis, while the other monomer binds to the replacement base PreQ1.</text>
</comment>
<comment type="similarity">
    <text evidence="1">Belongs to the queuine tRNA-ribosyltransferase family.</text>
</comment>
<protein>
    <recommendedName>
        <fullName evidence="1">Queuine tRNA-ribosyltransferase</fullName>
        <ecNumber evidence="1">2.4.2.29</ecNumber>
    </recommendedName>
    <alternativeName>
        <fullName evidence="1">Guanine insertion enzyme</fullName>
    </alternativeName>
    <alternativeName>
        <fullName evidence="1">tRNA-guanine transglycosylase</fullName>
    </alternativeName>
</protein>
<proteinExistence type="inferred from homology"/>
<accession>B2I6T4</accession>
<evidence type="ECO:0000255" key="1">
    <source>
        <dbReference type="HAMAP-Rule" id="MF_00168"/>
    </source>
</evidence>
<dbReference type="EC" id="2.4.2.29" evidence="1"/>
<dbReference type="EMBL" id="CP001011">
    <property type="protein sequence ID" value="ACB91624.1"/>
    <property type="molecule type" value="Genomic_DNA"/>
</dbReference>
<dbReference type="RefSeq" id="WP_004572967.1">
    <property type="nucleotide sequence ID" value="NC_010577.1"/>
</dbReference>
<dbReference type="SMR" id="B2I6T4"/>
<dbReference type="GeneID" id="93903871"/>
<dbReference type="KEGG" id="xfn:XfasM23_0167"/>
<dbReference type="HOGENOM" id="CLU_022060_0_1_6"/>
<dbReference type="UniPathway" id="UPA00392"/>
<dbReference type="Proteomes" id="UP000001698">
    <property type="component" value="Chromosome"/>
</dbReference>
<dbReference type="GO" id="GO:0005829">
    <property type="term" value="C:cytosol"/>
    <property type="evidence" value="ECO:0007669"/>
    <property type="project" value="TreeGrafter"/>
</dbReference>
<dbReference type="GO" id="GO:0046872">
    <property type="term" value="F:metal ion binding"/>
    <property type="evidence" value="ECO:0007669"/>
    <property type="project" value="UniProtKB-KW"/>
</dbReference>
<dbReference type="GO" id="GO:0008479">
    <property type="term" value="F:tRNA-guanosine(34) queuine transglycosylase activity"/>
    <property type="evidence" value="ECO:0007669"/>
    <property type="project" value="UniProtKB-UniRule"/>
</dbReference>
<dbReference type="GO" id="GO:0008616">
    <property type="term" value="P:queuosine biosynthetic process"/>
    <property type="evidence" value="ECO:0007669"/>
    <property type="project" value="UniProtKB-UniRule"/>
</dbReference>
<dbReference type="GO" id="GO:0002099">
    <property type="term" value="P:tRNA wobble guanine modification"/>
    <property type="evidence" value="ECO:0007669"/>
    <property type="project" value="TreeGrafter"/>
</dbReference>
<dbReference type="GO" id="GO:0101030">
    <property type="term" value="P:tRNA-guanine transglycosylation"/>
    <property type="evidence" value="ECO:0007669"/>
    <property type="project" value="InterPro"/>
</dbReference>
<dbReference type="FunFam" id="3.20.20.105:FF:000001">
    <property type="entry name" value="Queuine tRNA-ribosyltransferase"/>
    <property type="match status" value="1"/>
</dbReference>
<dbReference type="Gene3D" id="3.20.20.105">
    <property type="entry name" value="Queuine tRNA-ribosyltransferase-like"/>
    <property type="match status" value="1"/>
</dbReference>
<dbReference type="HAMAP" id="MF_00168">
    <property type="entry name" value="Q_tRNA_Tgt"/>
    <property type="match status" value="1"/>
</dbReference>
<dbReference type="InterPro" id="IPR050076">
    <property type="entry name" value="ArchSynthase1/Queuine_TRR"/>
</dbReference>
<dbReference type="InterPro" id="IPR004803">
    <property type="entry name" value="TGT"/>
</dbReference>
<dbReference type="InterPro" id="IPR036511">
    <property type="entry name" value="TGT-like_sf"/>
</dbReference>
<dbReference type="InterPro" id="IPR002616">
    <property type="entry name" value="tRNA_ribo_trans-like"/>
</dbReference>
<dbReference type="NCBIfam" id="TIGR00430">
    <property type="entry name" value="Q_tRNA_tgt"/>
    <property type="match status" value="1"/>
</dbReference>
<dbReference type="NCBIfam" id="TIGR00449">
    <property type="entry name" value="tgt_general"/>
    <property type="match status" value="1"/>
</dbReference>
<dbReference type="PANTHER" id="PTHR46499">
    <property type="entry name" value="QUEUINE TRNA-RIBOSYLTRANSFERASE"/>
    <property type="match status" value="1"/>
</dbReference>
<dbReference type="PANTHER" id="PTHR46499:SF1">
    <property type="entry name" value="QUEUINE TRNA-RIBOSYLTRANSFERASE"/>
    <property type="match status" value="1"/>
</dbReference>
<dbReference type="Pfam" id="PF01702">
    <property type="entry name" value="TGT"/>
    <property type="match status" value="1"/>
</dbReference>
<dbReference type="SUPFAM" id="SSF51713">
    <property type="entry name" value="tRNA-guanine transglycosylase"/>
    <property type="match status" value="1"/>
</dbReference>
<organism>
    <name type="scientific">Xylella fastidiosa (strain M23)</name>
    <dbReference type="NCBI Taxonomy" id="405441"/>
    <lineage>
        <taxon>Bacteria</taxon>
        <taxon>Pseudomonadati</taxon>
        <taxon>Pseudomonadota</taxon>
        <taxon>Gammaproteobacteria</taxon>
        <taxon>Lysobacterales</taxon>
        <taxon>Lysobacteraceae</taxon>
        <taxon>Xylella</taxon>
    </lineage>
</organism>
<keyword id="KW-0328">Glycosyltransferase</keyword>
<keyword id="KW-0479">Metal-binding</keyword>
<keyword id="KW-0671">Queuosine biosynthesis</keyword>
<keyword id="KW-0808">Transferase</keyword>
<keyword id="KW-0819">tRNA processing</keyword>
<keyword id="KW-0862">Zinc</keyword>
<feature type="chain" id="PRO_1000097579" description="Queuine tRNA-ribosyltransferase">
    <location>
        <begin position="1"/>
        <end position="377"/>
    </location>
</feature>
<feature type="region of interest" description="RNA binding" evidence="1">
    <location>
        <begin position="248"/>
        <end position="254"/>
    </location>
</feature>
<feature type="region of interest" description="RNA binding; important for wobble base 34 recognition" evidence="1">
    <location>
        <begin position="272"/>
        <end position="276"/>
    </location>
</feature>
<feature type="active site" description="Proton acceptor" evidence="1">
    <location>
        <position position="92"/>
    </location>
</feature>
<feature type="active site" description="Nucleophile" evidence="1">
    <location>
        <position position="267"/>
    </location>
</feature>
<feature type="binding site" evidence="1">
    <location>
        <begin position="92"/>
        <end position="96"/>
    </location>
    <ligand>
        <name>substrate</name>
    </ligand>
</feature>
<feature type="binding site" evidence="1">
    <location>
        <position position="146"/>
    </location>
    <ligand>
        <name>substrate</name>
    </ligand>
</feature>
<feature type="binding site" evidence="1">
    <location>
        <position position="190"/>
    </location>
    <ligand>
        <name>substrate</name>
    </ligand>
</feature>
<feature type="binding site" evidence="1">
    <location>
        <position position="217"/>
    </location>
    <ligand>
        <name>substrate</name>
    </ligand>
</feature>
<feature type="binding site" evidence="1">
    <location>
        <position position="305"/>
    </location>
    <ligand>
        <name>Zn(2+)</name>
        <dbReference type="ChEBI" id="CHEBI:29105"/>
    </ligand>
</feature>
<feature type="binding site" evidence="1">
    <location>
        <position position="307"/>
    </location>
    <ligand>
        <name>Zn(2+)</name>
        <dbReference type="ChEBI" id="CHEBI:29105"/>
    </ligand>
</feature>
<feature type="binding site" evidence="1">
    <location>
        <position position="310"/>
    </location>
    <ligand>
        <name>Zn(2+)</name>
        <dbReference type="ChEBI" id="CHEBI:29105"/>
    </ligand>
</feature>
<feature type="binding site" evidence="1">
    <location>
        <position position="337"/>
    </location>
    <ligand>
        <name>Zn(2+)</name>
        <dbReference type="ChEBI" id="CHEBI:29105"/>
    </ligand>
</feature>